<evidence type="ECO:0000250" key="1"/>
<evidence type="ECO:0000255" key="2">
    <source>
        <dbReference type="HAMAP-Rule" id="MF_00403"/>
    </source>
</evidence>
<evidence type="ECO:0000256" key="3">
    <source>
        <dbReference type="SAM" id="MobiDB-lite"/>
    </source>
</evidence>
<evidence type="ECO:0000305" key="4"/>
<gene>
    <name evidence="2" type="primary">rpsL</name>
    <name type="ordered locus">SPJ_0279</name>
</gene>
<feature type="chain" id="PRO_1000194216" description="Small ribosomal subunit protein uS12">
    <location>
        <begin position="1"/>
        <end position="137"/>
    </location>
</feature>
<feature type="region of interest" description="Disordered" evidence="3">
    <location>
        <begin position="1"/>
        <end position="57"/>
    </location>
</feature>
<feature type="modified residue" description="3-methylthioaspartic acid" evidence="1">
    <location>
        <position position="102"/>
    </location>
</feature>
<comment type="function">
    <text evidence="2">With S4 and S5 plays an important role in translational accuracy.</text>
</comment>
<comment type="function">
    <text evidence="2">Interacts with and stabilizes bases of the 16S rRNA that are involved in tRNA selection in the A site and with the mRNA backbone. Located at the interface of the 30S and 50S subunits, it traverses the body of the 30S subunit contacting proteins on the other side and probably holding the rRNA structure together. The combined cluster of proteins S8, S12 and S17 appears to hold together the shoulder and platform of the 30S subunit.</text>
</comment>
<comment type="subunit">
    <text evidence="2">Part of the 30S ribosomal subunit. Contacts proteins S8 and S17. May interact with IF1 in the 30S initiation complex.</text>
</comment>
<comment type="similarity">
    <text evidence="2">Belongs to the universal ribosomal protein uS12 family.</text>
</comment>
<protein>
    <recommendedName>
        <fullName evidence="2">Small ribosomal subunit protein uS12</fullName>
    </recommendedName>
    <alternativeName>
        <fullName evidence="4">30S ribosomal protein S12</fullName>
    </alternativeName>
</protein>
<reference key="1">
    <citation type="journal article" date="2010" name="Genome Biol.">
        <title>Structure and dynamics of the pan-genome of Streptococcus pneumoniae and closely related species.</title>
        <authorList>
            <person name="Donati C."/>
            <person name="Hiller N.L."/>
            <person name="Tettelin H."/>
            <person name="Muzzi A."/>
            <person name="Croucher N.J."/>
            <person name="Angiuoli S.V."/>
            <person name="Oggioni M."/>
            <person name="Dunning Hotopp J.C."/>
            <person name="Hu F.Z."/>
            <person name="Riley D.R."/>
            <person name="Covacci A."/>
            <person name="Mitchell T.J."/>
            <person name="Bentley S.D."/>
            <person name="Kilian M."/>
            <person name="Ehrlich G.D."/>
            <person name="Rappuoli R."/>
            <person name="Moxon E.R."/>
            <person name="Masignani V."/>
        </authorList>
    </citation>
    <scope>NUCLEOTIDE SEQUENCE [LARGE SCALE GENOMIC DNA]</scope>
    <source>
        <strain>JJA</strain>
    </source>
</reference>
<accession>C1CC60</accession>
<sequence length="137" mass="15144">MPTINQLVRKPRKSKVEKSKSPALNVGYNSHKKVQTNVSSPQKRGVATRVGTMTPKKPNSALRKFARVRLSNLIEVTAYIPGIGHNLQEHSVVLLRGGRVKDLPGVRYHIVRGALDTAGVNDRKQGRSKYGTKRPKA</sequence>
<dbReference type="EMBL" id="CP000919">
    <property type="protein sequence ID" value="ACO18774.1"/>
    <property type="molecule type" value="Genomic_DNA"/>
</dbReference>
<dbReference type="RefSeq" id="WP_001142332.1">
    <property type="nucleotide sequence ID" value="NC_012466.1"/>
</dbReference>
<dbReference type="SMR" id="C1CC60"/>
<dbReference type="GeneID" id="93922571"/>
<dbReference type="KEGG" id="sjj:SPJ_0279"/>
<dbReference type="HOGENOM" id="CLU_104295_1_2_9"/>
<dbReference type="Proteomes" id="UP000002206">
    <property type="component" value="Chromosome"/>
</dbReference>
<dbReference type="GO" id="GO:0015935">
    <property type="term" value="C:small ribosomal subunit"/>
    <property type="evidence" value="ECO:0007669"/>
    <property type="project" value="InterPro"/>
</dbReference>
<dbReference type="GO" id="GO:0019843">
    <property type="term" value="F:rRNA binding"/>
    <property type="evidence" value="ECO:0007669"/>
    <property type="project" value="UniProtKB-UniRule"/>
</dbReference>
<dbReference type="GO" id="GO:0003735">
    <property type="term" value="F:structural constituent of ribosome"/>
    <property type="evidence" value="ECO:0007669"/>
    <property type="project" value="InterPro"/>
</dbReference>
<dbReference type="GO" id="GO:0000049">
    <property type="term" value="F:tRNA binding"/>
    <property type="evidence" value="ECO:0007669"/>
    <property type="project" value="UniProtKB-UniRule"/>
</dbReference>
<dbReference type="GO" id="GO:0006412">
    <property type="term" value="P:translation"/>
    <property type="evidence" value="ECO:0007669"/>
    <property type="project" value="UniProtKB-UniRule"/>
</dbReference>
<dbReference type="CDD" id="cd03368">
    <property type="entry name" value="Ribosomal_S12"/>
    <property type="match status" value="1"/>
</dbReference>
<dbReference type="FunFam" id="2.40.50.140:FF:000001">
    <property type="entry name" value="30S ribosomal protein S12"/>
    <property type="match status" value="1"/>
</dbReference>
<dbReference type="Gene3D" id="2.40.50.140">
    <property type="entry name" value="Nucleic acid-binding proteins"/>
    <property type="match status" value="1"/>
</dbReference>
<dbReference type="HAMAP" id="MF_00403_B">
    <property type="entry name" value="Ribosomal_uS12_B"/>
    <property type="match status" value="1"/>
</dbReference>
<dbReference type="InterPro" id="IPR012340">
    <property type="entry name" value="NA-bd_OB-fold"/>
</dbReference>
<dbReference type="InterPro" id="IPR006032">
    <property type="entry name" value="Ribosomal_uS12"/>
</dbReference>
<dbReference type="InterPro" id="IPR005679">
    <property type="entry name" value="Ribosomal_uS12_bac"/>
</dbReference>
<dbReference type="NCBIfam" id="TIGR00981">
    <property type="entry name" value="rpsL_bact"/>
    <property type="match status" value="1"/>
</dbReference>
<dbReference type="PANTHER" id="PTHR11652">
    <property type="entry name" value="30S RIBOSOMAL PROTEIN S12 FAMILY MEMBER"/>
    <property type="match status" value="1"/>
</dbReference>
<dbReference type="Pfam" id="PF00164">
    <property type="entry name" value="Ribosom_S12_S23"/>
    <property type="match status" value="1"/>
</dbReference>
<dbReference type="PIRSF" id="PIRSF002133">
    <property type="entry name" value="Ribosomal_S12/S23"/>
    <property type="match status" value="1"/>
</dbReference>
<dbReference type="PRINTS" id="PR01034">
    <property type="entry name" value="RIBOSOMALS12"/>
</dbReference>
<dbReference type="SUPFAM" id="SSF50249">
    <property type="entry name" value="Nucleic acid-binding proteins"/>
    <property type="match status" value="1"/>
</dbReference>
<dbReference type="PROSITE" id="PS00055">
    <property type="entry name" value="RIBOSOMAL_S12"/>
    <property type="match status" value="1"/>
</dbReference>
<proteinExistence type="inferred from homology"/>
<organism>
    <name type="scientific">Streptococcus pneumoniae (strain JJA)</name>
    <dbReference type="NCBI Taxonomy" id="488222"/>
    <lineage>
        <taxon>Bacteria</taxon>
        <taxon>Bacillati</taxon>
        <taxon>Bacillota</taxon>
        <taxon>Bacilli</taxon>
        <taxon>Lactobacillales</taxon>
        <taxon>Streptococcaceae</taxon>
        <taxon>Streptococcus</taxon>
    </lineage>
</organism>
<name>RS12_STRZJ</name>
<keyword id="KW-0488">Methylation</keyword>
<keyword id="KW-0687">Ribonucleoprotein</keyword>
<keyword id="KW-0689">Ribosomal protein</keyword>
<keyword id="KW-0694">RNA-binding</keyword>
<keyword id="KW-0699">rRNA-binding</keyword>
<keyword id="KW-0820">tRNA-binding</keyword>